<reference key="1">
    <citation type="journal article" date="2006" name="PLoS Genet.">
        <title>Secrets of soil survival revealed by the genome sequence of Arthrobacter aurescens TC1.</title>
        <authorList>
            <person name="Mongodin E.F."/>
            <person name="Shapir N."/>
            <person name="Daugherty S.C."/>
            <person name="DeBoy R.T."/>
            <person name="Emerson J.B."/>
            <person name="Shvartzbeyn A."/>
            <person name="Radune D."/>
            <person name="Vamathevan J."/>
            <person name="Riggs F."/>
            <person name="Grinberg V."/>
            <person name="Khouri H.M."/>
            <person name="Wackett L.P."/>
            <person name="Nelson K.E."/>
            <person name="Sadowsky M.J."/>
        </authorList>
    </citation>
    <scope>NUCLEOTIDE SEQUENCE [LARGE SCALE GENOMIC DNA]</scope>
    <source>
        <strain>TC1</strain>
    </source>
</reference>
<sequence>MGQKVNPHGFRLGITTDHVSHWFADSTKPGQRYKDFVREDIKIRQLMSTGMERAGIAKVEIERTRDRVRVDIHTARPGIVIGRRGAEADRIRGELEKLTGKQVQLNILEVKNPEMEAQLVAQGIAEQLTSRVAFRRAMKKAMQSAQRAGAKGIRVACSGRLGGAEMSRSEFYREGRVPLHTLRANIDYGFYEAKTTFGRIGVKVWIYKGDVTAKELAQQAAAAPSRGRAGDRPGRPGGDRRRRNDRPAAEAAPAAVEAPAAEAAAPAAEGGQA</sequence>
<protein>
    <recommendedName>
        <fullName evidence="1">Small ribosomal subunit protein uS3</fullName>
    </recommendedName>
    <alternativeName>
        <fullName evidence="3">30S ribosomal protein S3</fullName>
    </alternativeName>
</protein>
<proteinExistence type="inferred from homology"/>
<feature type="chain" id="PRO_0000293750" description="Small ribosomal subunit protein uS3">
    <location>
        <begin position="1"/>
        <end position="273"/>
    </location>
</feature>
<feature type="domain" description="KH type-2" evidence="1">
    <location>
        <begin position="43"/>
        <end position="111"/>
    </location>
</feature>
<feature type="region of interest" description="Disordered" evidence="2">
    <location>
        <begin position="218"/>
        <end position="273"/>
    </location>
</feature>
<feature type="compositionally biased region" description="Low complexity" evidence="2">
    <location>
        <begin position="218"/>
        <end position="227"/>
    </location>
</feature>
<feature type="compositionally biased region" description="Basic and acidic residues" evidence="2">
    <location>
        <begin position="228"/>
        <end position="239"/>
    </location>
</feature>
<feature type="compositionally biased region" description="Low complexity" evidence="2">
    <location>
        <begin position="249"/>
        <end position="273"/>
    </location>
</feature>
<comment type="function">
    <text evidence="1">Binds the lower part of the 30S subunit head. Binds mRNA in the 70S ribosome, positioning it for translation.</text>
</comment>
<comment type="subunit">
    <text evidence="1">Part of the 30S ribosomal subunit. Forms a tight complex with proteins S10 and S14.</text>
</comment>
<comment type="similarity">
    <text evidence="1">Belongs to the universal ribosomal protein uS3 family.</text>
</comment>
<evidence type="ECO:0000255" key="1">
    <source>
        <dbReference type="HAMAP-Rule" id="MF_01309"/>
    </source>
</evidence>
<evidence type="ECO:0000256" key="2">
    <source>
        <dbReference type="SAM" id="MobiDB-lite"/>
    </source>
</evidence>
<evidence type="ECO:0000305" key="3"/>
<keyword id="KW-0687">Ribonucleoprotein</keyword>
<keyword id="KW-0689">Ribosomal protein</keyword>
<keyword id="KW-0694">RNA-binding</keyword>
<keyword id="KW-0699">rRNA-binding</keyword>
<gene>
    <name evidence="1" type="primary">rpsC</name>
    <name type="ordered locus">AAur_2942</name>
</gene>
<accession>A1R8T9</accession>
<name>RS3_PAEAT</name>
<organism>
    <name type="scientific">Paenarthrobacter aurescens (strain TC1)</name>
    <dbReference type="NCBI Taxonomy" id="290340"/>
    <lineage>
        <taxon>Bacteria</taxon>
        <taxon>Bacillati</taxon>
        <taxon>Actinomycetota</taxon>
        <taxon>Actinomycetes</taxon>
        <taxon>Micrococcales</taxon>
        <taxon>Micrococcaceae</taxon>
        <taxon>Paenarthrobacter</taxon>
    </lineage>
</organism>
<dbReference type="EMBL" id="CP000474">
    <property type="protein sequence ID" value="ABM08643.1"/>
    <property type="molecule type" value="Genomic_DNA"/>
</dbReference>
<dbReference type="RefSeq" id="WP_011775589.1">
    <property type="nucleotide sequence ID" value="NC_008711.1"/>
</dbReference>
<dbReference type="SMR" id="A1R8T9"/>
<dbReference type="STRING" id="290340.AAur_2942"/>
<dbReference type="GeneID" id="97301786"/>
<dbReference type="KEGG" id="aau:AAur_2942"/>
<dbReference type="eggNOG" id="COG0092">
    <property type="taxonomic scope" value="Bacteria"/>
</dbReference>
<dbReference type="HOGENOM" id="CLU_058591_0_2_11"/>
<dbReference type="OrthoDB" id="9806396at2"/>
<dbReference type="Proteomes" id="UP000000637">
    <property type="component" value="Chromosome"/>
</dbReference>
<dbReference type="GO" id="GO:0022627">
    <property type="term" value="C:cytosolic small ribosomal subunit"/>
    <property type="evidence" value="ECO:0007669"/>
    <property type="project" value="TreeGrafter"/>
</dbReference>
<dbReference type="GO" id="GO:0003729">
    <property type="term" value="F:mRNA binding"/>
    <property type="evidence" value="ECO:0007669"/>
    <property type="project" value="UniProtKB-UniRule"/>
</dbReference>
<dbReference type="GO" id="GO:0019843">
    <property type="term" value="F:rRNA binding"/>
    <property type="evidence" value="ECO:0007669"/>
    <property type="project" value="UniProtKB-UniRule"/>
</dbReference>
<dbReference type="GO" id="GO:0003735">
    <property type="term" value="F:structural constituent of ribosome"/>
    <property type="evidence" value="ECO:0007669"/>
    <property type="project" value="InterPro"/>
</dbReference>
<dbReference type="GO" id="GO:0006412">
    <property type="term" value="P:translation"/>
    <property type="evidence" value="ECO:0007669"/>
    <property type="project" value="UniProtKB-UniRule"/>
</dbReference>
<dbReference type="CDD" id="cd02412">
    <property type="entry name" value="KH-II_30S_S3"/>
    <property type="match status" value="1"/>
</dbReference>
<dbReference type="FunFam" id="3.30.1140.32:FF:000002">
    <property type="entry name" value="30S ribosomal protein S3"/>
    <property type="match status" value="1"/>
</dbReference>
<dbReference type="FunFam" id="3.30.300.20:FF:000001">
    <property type="entry name" value="30S ribosomal protein S3"/>
    <property type="match status" value="1"/>
</dbReference>
<dbReference type="Gene3D" id="3.30.300.20">
    <property type="match status" value="1"/>
</dbReference>
<dbReference type="Gene3D" id="3.30.1140.32">
    <property type="entry name" value="Ribosomal protein S3, C-terminal domain"/>
    <property type="match status" value="1"/>
</dbReference>
<dbReference type="HAMAP" id="MF_01309_B">
    <property type="entry name" value="Ribosomal_uS3_B"/>
    <property type="match status" value="1"/>
</dbReference>
<dbReference type="InterPro" id="IPR004087">
    <property type="entry name" value="KH_dom"/>
</dbReference>
<dbReference type="InterPro" id="IPR015946">
    <property type="entry name" value="KH_dom-like_a/b"/>
</dbReference>
<dbReference type="InterPro" id="IPR004044">
    <property type="entry name" value="KH_dom_type_2"/>
</dbReference>
<dbReference type="InterPro" id="IPR009019">
    <property type="entry name" value="KH_sf_prok-type"/>
</dbReference>
<dbReference type="InterPro" id="IPR036419">
    <property type="entry name" value="Ribosomal_S3_C_sf"/>
</dbReference>
<dbReference type="InterPro" id="IPR005704">
    <property type="entry name" value="Ribosomal_uS3_bac-typ"/>
</dbReference>
<dbReference type="InterPro" id="IPR001351">
    <property type="entry name" value="Ribosomal_uS3_C"/>
</dbReference>
<dbReference type="InterPro" id="IPR018280">
    <property type="entry name" value="Ribosomal_uS3_CS"/>
</dbReference>
<dbReference type="NCBIfam" id="TIGR01009">
    <property type="entry name" value="rpsC_bact"/>
    <property type="match status" value="1"/>
</dbReference>
<dbReference type="PANTHER" id="PTHR11760">
    <property type="entry name" value="30S/40S RIBOSOMAL PROTEIN S3"/>
    <property type="match status" value="1"/>
</dbReference>
<dbReference type="PANTHER" id="PTHR11760:SF19">
    <property type="entry name" value="SMALL RIBOSOMAL SUBUNIT PROTEIN US3C"/>
    <property type="match status" value="1"/>
</dbReference>
<dbReference type="Pfam" id="PF07650">
    <property type="entry name" value="KH_2"/>
    <property type="match status" value="1"/>
</dbReference>
<dbReference type="Pfam" id="PF00189">
    <property type="entry name" value="Ribosomal_S3_C"/>
    <property type="match status" value="1"/>
</dbReference>
<dbReference type="SMART" id="SM00322">
    <property type="entry name" value="KH"/>
    <property type="match status" value="1"/>
</dbReference>
<dbReference type="SUPFAM" id="SSF54814">
    <property type="entry name" value="Prokaryotic type KH domain (KH-domain type II)"/>
    <property type="match status" value="1"/>
</dbReference>
<dbReference type="SUPFAM" id="SSF54821">
    <property type="entry name" value="Ribosomal protein S3 C-terminal domain"/>
    <property type="match status" value="1"/>
</dbReference>
<dbReference type="PROSITE" id="PS50823">
    <property type="entry name" value="KH_TYPE_2"/>
    <property type="match status" value="1"/>
</dbReference>
<dbReference type="PROSITE" id="PS00548">
    <property type="entry name" value="RIBOSOMAL_S3"/>
    <property type="match status" value="1"/>
</dbReference>